<comment type="function">
    <text evidence="1 3">Antimicrobial and mast cell degranulating peptide which probably acts by forming pores in membranes (PubMed:28546807). Active against Gram-negative bacterium E.coli NBRC 14237 (MIC=3.12 uM), against Gram-positive bacteria S.aureus NBRC 12732 (MIC=3.12 uM) and M.luteus NBRC 12708 (MIC=6.25 uM) as well as against yeast S.cerevisiae NBRC 10217 (MIC=25 uM) (PubMed:28546807). Has hemolytic activity (at 100 uM) (PubMed:28546807). In the context of inflammation and cancer tests, is weakly cytotoxic to normal cells, induces calcium signaling but does not impact cAMP production (PubMed:36548715). In addition, prevents LPS-induced nitric oxid (NO) synthesis but does not affect the IP3 signaling and pro-inflammatory activation of endothelial cells (PubMed:36548715). Does not show significant antiproliferative activity on the breast cancer cell line MDA-MB-231 (PubMed:36548715).</text>
</comment>
<comment type="subcellular location">
    <subcellularLocation>
        <location evidence="1 2">Secreted</location>
    </subcellularLocation>
    <subcellularLocation>
        <location evidence="8">Target cell membrane</location>
    </subcellularLocation>
    <text evidence="1">Assumes an amphipathic alpha-helical conformation in a lipid environment.</text>
</comment>
<comment type="tissue specificity">
    <text evidence="8">Expressed by the venom gland.</text>
</comment>
<comment type="mass spectrometry"/>
<comment type="mass spectrometry"/>
<comment type="similarity">
    <text evidence="7">Belongs to the xylopin-like family.</text>
</comment>
<keyword id="KW-0027">Amidation</keyword>
<keyword id="KW-0044">Antibiotic</keyword>
<keyword id="KW-0929">Antimicrobial</keyword>
<keyword id="KW-0903">Direct protein sequencing</keyword>
<keyword id="KW-0295">Fungicide</keyword>
<keyword id="KW-0472">Membrane</keyword>
<keyword id="KW-0964">Secreted</keyword>
<keyword id="KW-1052">Target cell membrane</keyword>
<keyword id="KW-1053">Target membrane</keyword>
<organism evidence="4">
    <name type="scientific">Xylocopa appendiculata circumvolans</name>
    <name type="common">Japanese carpenter bee</name>
    <dbReference type="NCBI Taxonomy" id="135722"/>
    <lineage>
        <taxon>Eukaryota</taxon>
        <taxon>Metazoa</taxon>
        <taxon>Ecdysozoa</taxon>
        <taxon>Arthropoda</taxon>
        <taxon>Hexapoda</taxon>
        <taxon>Insecta</taxon>
        <taxon>Pterygota</taxon>
        <taxon>Neoptera</taxon>
        <taxon>Endopterygota</taxon>
        <taxon>Hymenoptera</taxon>
        <taxon>Apocrita</taxon>
        <taxon>Aculeata</taxon>
        <taxon>Apoidea</taxon>
        <taxon>Anthophila</taxon>
        <taxon>Apidae</taxon>
        <taxon>Xylocopa</taxon>
        <taxon>Alloxylocopa</taxon>
    </lineage>
</organism>
<proteinExistence type="evidence at protein level"/>
<reference evidence="7" key="1">
    <citation type="journal article" date="2017" name="J. Venom. Anim. Toxins Incl. Trop. Dis.">
        <title>Isolation of biologically active peptides from the venom of Japanese carpenter bee, Xylocopa appendiculata.</title>
        <authorList>
            <person name="Kawakami H."/>
            <person name="Goto S.G."/>
            <person name="Murata K."/>
            <person name="Matsuda H."/>
            <person name="Shigeri Y."/>
            <person name="Imura T."/>
            <person name="Inagaki H."/>
            <person name="Shinada T."/>
        </authorList>
    </citation>
    <scope>PROTEIN SEQUENCE</scope>
    <scope>FUNCTION</scope>
    <scope>SUBCELLULAR LOCATION</scope>
    <scope>MASS SPECTROMETRY</scope>
    <scope>IDENTIFICATION BY MASS SPECTROMETRY</scope>
    <scope>AMIDATION AT PRO-17</scope>
    <source>
        <tissue evidence="4">Venom</tissue>
    </source>
</reference>
<reference key="2">
    <citation type="journal article" date="2017" name="J. Venom. Anim. Toxins Incl. Trop. Dis.">
        <title>Peptidomic analysis of the venom of the solitary bee Xylocopa appendiculata circumvolans.</title>
        <authorList>
            <person name="Kazuma K."/>
            <person name="Ando K."/>
            <person name="Nihei K.I."/>
            <person name="Wang X."/>
            <person name="Rangel M."/>
            <person name="Franzolin M.R."/>
            <person name="Mori-Yasumoto K."/>
            <person name="Sekita S."/>
            <person name="Kadowaki M."/>
            <person name="Satake M."/>
            <person name="Konno K."/>
        </authorList>
    </citation>
    <scope>PROTEIN SEQUENCE</scope>
    <scope>MASS SPECTROMETRY</scope>
    <scope>SUBCELLULAR LOCATION</scope>
    <scope>AMIDATION AT PRO-17</scope>
    <source>
        <tissue evidence="5">Venom</tissue>
    </source>
</reference>
<reference key="3">
    <citation type="journal article" date="2022" name="Toxins">
        <title>The pharmacological potential of novel melittin variants from the honeybee and solitary bees against inflammation and cancer.</title>
        <authorList>
            <person name="Erkoc P."/>
            <person name="von Reumont B.M."/>
            <person name="Lueddecke T."/>
            <person name="Henke M."/>
            <person name="Ulshoefer T."/>
            <person name="Vilcinskas A."/>
            <person name="Fuerst R."/>
            <person name="Schiffmann S."/>
        </authorList>
    </citation>
    <scope>FUNCTION</scope>
</reference>
<protein>
    <recommendedName>
        <fullName evidence="4">Antimicrobial peptide Xac-2</fullName>
        <shortName evidence="6">Xac2</shortName>
    </recommendedName>
    <alternativeName>
        <fullName evidence="5">Xylopinin</fullName>
    </alternativeName>
</protein>
<accession>C0HKQ6</accession>
<evidence type="ECO:0000269" key="1">
    <source>
    </source>
</evidence>
<evidence type="ECO:0000269" key="2">
    <source>
    </source>
</evidence>
<evidence type="ECO:0000269" key="3">
    <source>
    </source>
</evidence>
<evidence type="ECO:0000303" key="4">
    <source>
    </source>
</evidence>
<evidence type="ECO:0000303" key="5">
    <source>
    </source>
</evidence>
<evidence type="ECO:0000303" key="6">
    <source>
    </source>
</evidence>
<evidence type="ECO:0000305" key="7"/>
<evidence type="ECO:0000305" key="8">
    <source>
    </source>
</evidence>
<name>XAC2_XYLAI</name>
<dbReference type="GO" id="GO:0005576">
    <property type="term" value="C:extracellular region"/>
    <property type="evidence" value="ECO:0000314"/>
    <property type="project" value="UniProtKB"/>
</dbReference>
<dbReference type="GO" id="GO:0016020">
    <property type="term" value="C:membrane"/>
    <property type="evidence" value="ECO:0007669"/>
    <property type="project" value="UniProtKB-KW"/>
</dbReference>
<dbReference type="GO" id="GO:0044218">
    <property type="term" value="C:other organism cell membrane"/>
    <property type="evidence" value="ECO:0007669"/>
    <property type="project" value="UniProtKB-KW"/>
</dbReference>
<dbReference type="GO" id="GO:0050832">
    <property type="term" value="P:defense response to fungus"/>
    <property type="evidence" value="ECO:0000314"/>
    <property type="project" value="UniProtKB"/>
</dbReference>
<dbReference type="GO" id="GO:0050829">
    <property type="term" value="P:defense response to Gram-negative bacterium"/>
    <property type="evidence" value="ECO:0000314"/>
    <property type="project" value="UniProtKB"/>
</dbReference>
<dbReference type="GO" id="GO:0050830">
    <property type="term" value="P:defense response to Gram-positive bacterium"/>
    <property type="evidence" value="ECO:0000314"/>
    <property type="project" value="UniProtKB"/>
</dbReference>
<dbReference type="GO" id="GO:0031640">
    <property type="term" value="P:killing of cells of another organism"/>
    <property type="evidence" value="ECO:0007669"/>
    <property type="project" value="UniProtKB-KW"/>
</dbReference>
<sequence>GFVALLKKLPLILKHLP</sequence>
<feature type="peptide" id="PRO_0000441218" description="Antimicrobial peptide Xac-2" evidence="1 2">
    <location>
        <begin position="1"/>
        <end position="17"/>
    </location>
</feature>
<feature type="modified residue" description="Proline amide" evidence="1 2">
    <location>
        <position position="17"/>
    </location>
</feature>